<protein>
    <recommendedName>
        <fullName evidence="5">ATP synthase peripheral stalk subunit d, mitochondrial</fullName>
        <shortName>ATPase subunit d</shortName>
    </recommendedName>
    <alternativeName>
        <fullName evidence="5">ATP synthase peripheral stalk subunit d</fullName>
    </alternativeName>
</protein>
<dbReference type="EMBL" id="AF354051">
    <property type="protein sequence ID" value="AAL83962.1"/>
    <property type="molecule type" value="mRNA"/>
</dbReference>
<dbReference type="EMBL" id="AK002376">
    <property type="protein sequence ID" value="BAB22053.1"/>
    <property type="molecule type" value="mRNA"/>
</dbReference>
<dbReference type="EMBL" id="AK088617">
    <property type="protein sequence ID" value="BAC40456.1"/>
    <property type="molecule type" value="mRNA"/>
</dbReference>
<dbReference type="EMBL" id="AL627096">
    <property type="status" value="NOT_ANNOTATED_CDS"/>
    <property type="molecule type" value="Genomic_DNA"/>
</dbReference>
<dbReference type="EMBL" id="BC016547">
    <property type="protein sequence ID" value="AAH16547.1"/>
    <property type="molecule type" value="mRNA"/>
</dbReference>
<dbReference type="EMBL" id="BC081431">
    <property type="protein sequence ID" value="AAH81431.1"/>
    <property type="molecule type" value="mRNA"/>
</dbReference>
<dbReference type="CCDS" id="CCDS25633.1"/>
<dbReference type="PIR" id="PN0046">
    <property type="entry name" value="PN0046"/>
</dbReference>
<dbReference type="RefSeq" id="NP_001404861.1">
    <property type="nucleotide sequence ID" value="NM_001417932.1"/>
</dbReference>
<dbReference type="RefSeq" id="NP_001404862.1">
    <property type="nucleotide sequence ID" value="NM_001417933.1"/>
</dbReference>
<dbReference type="RefSeq" id="NP_001404863.1">
    <property type="nucleotide sequence ID" value="NM_001417934.1"/>
</dbReference>
<dbReference type="RefSeq" id="NP_082138.1">
    <property type="nucleotide sequence ID" value="NM_027862.2"/>
</dbReference>
<dbReference type="RefSeq" id="XP_006534317.1">
    <property type="nucleotide sequence ID" value="XM_006534254.1"/>
</dbReference>
<dbReference type="SMR" id="Q9DCX2"/>
<dbReference type="BioGRID" id="214850">
    <property type="interactions" value="94"/>
</dbReference>
<dbReference type="FunCoup" id="Q9DCX2">
    <property type="interactions" value="2304"/>
</dbReference>
<dbReference type="IntAct" id="Q9DCX2">
    <property type="interactions" value="7"/>
</dbReference>
<dbReference type="MINT" id="Q9DCX2"/>
<dbReference type="STRING" id="10090.ENSMUSP00000102147"/>
<dbReference type="GlyGen" id="Q9DCX2">
    <property type="glycosylation" value="1 site, 1 O-linked glycan (1 site)"/>
</dbReference>
<dbReference type="iPTMnet" id="Q9DCX2"/>
<dbReference type="MetOSite" id="Q9DCX2"/>
<dbReference type="PhosphoSitePlus" id="Q9DCX2"/>
<dbReference type="SwissPalm" id="Q9DCX2"/>
<dbReference type="REPRODUCTION-2DPAGE" id="Q9DCX2"/>
<dbReference type="CPTAC" id="non-CPTAC-3637"/>
<dbReference type="jPOST" id="Q9DCX2"/>
<dbReference type="PaxDb" id="10090-ENSMUSP00000102147"/>
<dbReference type="PeptideAtlas" id="Q9DCX2"/>
<dbReference type="ProteomicsDB" id="265167"/>
<dbReference type="Pumba" id="Q9DCX2"/>
<dbReference type="TopDownProteomics" id="Q9DCX2"/>
<dbReference type="Antibodypedia" id="32083">
    <property type="antibodies" value="265 antibodies from 32 providers"/>
</dbReference>
<dbReference type="DNASU" id="71679"/>
<dbReference type="Ensembl" id="ENSMUST00000043931.9">
    <property type="protein sequence ID" value="ENSMUSP00000046256.3"/>
    <property type="gene ID" value="ENSMUSG00000034566.11"/>
</dbReference>
<dbReference type="Ensembl" id="ENSMUST00000073791.10">
    <property type="protein sequence ID" value="ENSMUSP00000086072.3"/>
    <property type="gene ID" value="ENSMUSG00000034566.11"/>
</dbReference>
<dbReference type="Ensembl" id="ENSMUST00000106537.8">
    <property type="protein sequence ID" value="ENSMUSP00000102147.2"/>
    <property type="gene ID" value="ENSMUSG00000034566.11"/>
</dbReference>
<dbReference type="Ensembl" id="ENSMUST00000180072.8">
    <property type="protein sequence ID" value="ENSMUSP00000137071.2"/>
    <property type="gene ID" value="ENSMUSG00000034566.11"/>
</dbReference>
<dbReference type="GeneID" id="71679"/>
<dbReference type="KEGG" id="mmu:71679"/>
<dbReference type="UCSC" id="uc007mhm.1">
    <property type="organism name" value="mouse"/>
</dbReference>
<dbReference type="AGR" id="MGI:1918929"/>
<dbReference type="CTD" id="10476"/>
<dbReference type="MGI" id="MGI:1918929">
    <property type="gene designation" value="Atp5pd"/>
</dbReference>
<dbReference type="VEuPathDB" id="HostDB:ENSMUSG00000034566"/>
<dbReference type="eggNOG" id="KOG3366">
    <property type="taxonomic scope" value="Eukaryota"/>
</dbReference>
<dbReference type="GeneTree" id="ENSGT00390000003582"/>
<dbReference type="HOGENOM" id="CLU_130600_0_0_1"/>
<dbReference type="InParanoid" id="Q9DCX2"/>
<dbReference type="OMA" id="VSKGRWA"/>
<dbReference type="OrthoDB" id="35799at2759"/>
<dbReference type="PhylomeDB" id="Q9DCX2"/>
<dbReference type="TreeFam" id="TF314031"/>
<dbReference type="Reactome" id="R-MMU-163210">
    <property type="pathway name" value="Formation of ATP by chemiosmotic coupling"/>
</dbReference>
<dbReference type="Reactome" id="R-MMU-8949613">
    <property type="pathway name" value="Cristae formation"/>
</dbReference>
<dbReference type="Reactome" id="R-MMU-9837999">
    <property type="pathway name" value="Mitochondrial protein degradation"/>
</dbReference>
<dbReference type="BioGRID-ORCS" id="71679">
    <property type="hits" value="15 hits in 62 CRISPR screens"/>
</dbReference>
<dbReference type="CD-CODE" id="CE726F99">
    <property type="entry name" value="Postsynaptic density"/>
</dbReference>
<dbReference type="ChiTaRS" id="Atp5h">
    <property type="organism name" value="mouse"/>
</dbReference>
<dbReference type="PRO" id="PR:Q9DCX2"/>
<dbReference type="Proteomes" id="UP000000589">
    <property type="component" value="Chromosome 11"/>
</dbReference>
<dbReference type="RNAct" id="Q9DCX2">
    <property type="molecule type" value="protein"/>
</dbReference>
<dbReference type="Bgee" id="ENSMUSG00000034566">
    <property type="expression patterns" value="Expressed in heart and 102 other cell types or tissues"/>
</dbReference>
<dbReference type="ExpressionAtlas" id="Q9DCX2">
    <property type="expression patterns" value="baseline and differential"/>
</dbReference>
<dbReference type="GO" id="GO:0005743">
    <property type="term" value="C:mitochondrial inner membrane"/>
    <property type="evidence" value="ECO:0007005"/>
    <property type="project" value="MGI"/>
</dbReference>
<dbReference type="GO" id="GO:0005739">
    <property type="term" value="C:mitochondrion"/>
    <property type="evidence" value="ECO:0000314"/>
    <property type="project" value="UniProtKB"/>
</dbReference>
<dbReference type="GO" id="GO:0043209">
    <property type="term" value="C:myelin sheath"/>
    <property type="evidence" value="ECO:0007005"/>
    <property type="project" value="UniProtKB"/>
</dbReference>
<dbReference type="GO" id="GO:0045259">
    <property type="term" value="C:proton-transporting ATP synthase complex"/>
    <property type="evidence" value="ECO:0000250"/>
    <property type="project" value="UniProtKB"/>
</dbReference>
<dbReference type="GO" id="GO:0046933">
    <property type="term" value="F:proton-transporting ATP synthase activity, rotational mechanism"/>
    <property type="evidence" value="ECO:0007669"/>
    <property type="project" value="Ensembl"/>
</dbReference>
<dbReference type="GO" id="GO:0042776">
    <property type="term" value="P:proton motive force-driven mitochondrial ATP synthesis"/>
    <property type="evidence" value="ECO:0007669"/>
    <property type="project" value="Ensembl"/>
</dbReference>
<dbReference type="Gene3D" id="6.10.280.70">
    <property type="match status" value="1"/>
</dbReference>
<dbReference type="InterPro" id="IPR008689">
    <property type="entry name" value="ATP_synth_F0_dsu_mt"/>
</dbReference>
<dbReference type="InterPro" id="IPR036228">
    <property type="entry name" value="ATP_synth_F0_dsu_sf_mt"/>
</dbReference>
<dbReference type="PANTHER" id="PTHR12700">
    <property type="entry name" value="ATP SYNTHASE SUBUNIT D, MITOCHONDRIAL"/>
    <property type="match status" value="1"/>
</dbReference>
<dbReference type="Pfam" id="PF05873">
    <property type="entry name" value="Mt_ATP-synt_D"/>
    <property type="match status" value="1"/>
</dbReference>
<dbReference type="PIRSF" id="PIRSF005514">
    <property type="entry name" value="ATPase_F0_D_mt"/>
    <property type="match status" value="1"/>
</dbReference>
<dbReference type="SUPFAM" id="SSF161065">
    <property type="entry name" value="ATP synthase D chain-like"/>
    <property type="match status" value="1"/>
</dbReference>
<feature type="initiator methionine" description="Removed" evidence="2">
    <location>
        <position position="1"/>
    </location>
</feature>
<feature type="chain" id="PRO_0000071674" description="ATP synthase peripheral stalk subunit d, mitochondrial">
    <location>
        <begin position="2"/>
        <end position="161"/>
    </location>
</feature>
<feature type="modified residue" description="N-acetylalanine" evidence="2">
    <location>
        <position position="2"/>
    </location>
</feature>
<feature type="modified residue" description="N6-acetyllysine" evidence="7">
    <location>
        <position position="32"/>
    </location>
</feature>
<feature type="modified residue" description="N6-acetyllysine" evidence="7">
    <location>
        <position position="48"/>
    </location>
</feature>
<feature type="modified residue" description="N6-acetyllysine" evidence="7">
    <location>
        <position position="63"/>
    </location>
</feature>
<feature type="modified residue" description="N6-acetyllysine" evidence="7">
    <location>
        <position position="72"/>
    </location>
</feature>
<feature type="modified residue" description="N6-acetyllysine; alternate" evidence="7">
    <location>
        <position position="78"/>
    </location>
</feature>
<feature type="modified residue" description="N6-succinyllysine; alternate" evidence="8">
    <location>
        <position position="78"/>
    </location>
</feature>
<feature type="modified residue" description="N6-acetyllysine; alternate" evidence="7">
    <location>
        <position position="85"/>
    </location>
</feature>
<feature type="modified residue" description="N6-succinyllysine; alternate" evidence="8">
    <location>
        <position position="85"/>
    </location>
</feature>
<feature type="modified residue" description="N6-acetyllysine; alternate" evidence="7">
    <location>
        <position position="95"/>
    </location>
</feature>
<feature type="modified residue" description="N6-succinyllysine; alternate" evidence="8">
    <location>
        <position position="95"/>
    </location>
</feature>
<feature type="modified residue" description="N6-acetyllysine" evidence="6 7">
    <location>
        <position position="117"/>
    </location>
</feature>
<feature type="modified residue" description="N6-acetyllysine; alternate" evidence="7">
    <location>
        <position position="144"/>
    </location>
</feature>
<feature type="modified residue" description="N6-succinyllysine; alternate" evidence="8">
    <location>
        <position position="144"/>
    </location>
</feature>
<feature type="modified residue" description="N6-acetyllysine; alternate" evidence="7">
    <location>
        <position position="149"/>
    </location>
</feature>
<feature type="modified residue" description="N6-succinyllysine; alternate" evidence="8">
    <location>
        <position position="149"/>
    </location>
</feature>
<feature type="sequence conflict" description="In Ref. 4; AAH16547." evidence="5" ref="4">
    <original>V</original>
    <variation>L</variation>
    <location>
        <position position="90"/>
    </location>
</feature>
<feature type="sequence conflict" description="In Ref. 6; AA sequence." evidence="5" ref="6">
    <original>ENL</original>
    <variation>LMC</variation>
    <location>
        <begin position="159"/>
        <end position="161"/>
    </location>
</feature>
<gene>
    <name evidence="1" type="primary">Atp5pd</name>
    <name type="synonym">Atp5h</name>
</gene>
<proteinExistence type="evidence at protein level"/>
<sequence length="161" mass="18749">MAGRKLALKTIDWVSFVEVMPQNQKAIGNALKSWNETFHARLASLSEKPPAIDWAYYRANVAKPGLVDDFEKKYNALKIPVPEDKYTALVDQEEKEDVKSCAEFVSGSQLRIQEYEKQLEKMRNIIPFDQMTIDDLNEIFPETKLDKKKYPYWPHQPIENL</sequence>
<comment type="function">
    <text evidence="1 2 3">Subunit d, of the mitochondrial membrane ATP synthase complex (F(1)F(0) ATP synthase or Complex V) that produces ATP from ADP in the presence of a proton gradient across the membrane which is generated by electron transport complexes of the respiratory chain. ATP synthase complex consist of a soluble F(1) head domain - the catalytic core - and a membrane F(1) domain - the membrane proton channel. These two domains are linked by a central stalk rotating inside the F(1) region and a stationary peripheral stalk. During catalysis, ATP synthesis in the catalytic domain of F(1) is coupled via a rotary mechanism of the central stalk subunits to proton translocation (By similarity). In vivo, can only synthesize ATP although its ATP hydrolase activity can be activated artificially in vitro (By similarity). Part of the complex F(0) domain (By similarity). Part of the complex F(0) domain and the peripheric stalk, which acts as a stator to hold the catalytic alpha(3)beta(3) subcomplex and subunit a/ATP6 static relative to the rotary elements (By similarity).</text>
</comment>
<comment type="subunit">
    <text evidence="1 4">Component of the ATP synthase complex composed at least of ATP5F1A/subunit alpha, ATP5F1B/subunit beta, ATP5MC1/subunit c (homooctomer), MT-ATP6/subunit a, MT-ATP8/subunit 8, ATP5ME/subunit e, ATP5MF/subunit f, ATP5MG/subunit g, ATP5MK/subunit k, ATP5MJ/subunit j, ATP5F1C/subunit gamma, ATP5F1D/subunit delta, ATP5F1E/subunit epsilon, ATP5PF/subunit F6, ATP5PB/subunit b, ATP5PD/subunit d, ATP5PO/subunit OSCP. ATP synthase complex consists of a soluble F(1) head domain (subunits alpha(3) and beta(3)) - the catalytic core - and a membrane F(0) domain - the membrane proton channel (subunits c, a, 8, e, f, g, k and j). These two domains are linked by a central stalk (subunits gamma, delta, and epsilon) rotating inside the F1 region and a stationary peripheral stalk (subunits F6, b, d, and OSCP) (By similarity). Interacts with FLVCR2; this interaction occurs in the absence of heme and is disrupted upon heme binding (PubMed:32973183).</text>
</comment>
<comment type="subcellular location">
    <subcellularLocation>
        <location>Mitochondrion</location>
    </subcellularLocation>
    <subcellularLocation>
        <location>Mitochondrion inner membrane</location>
    </subcellularLocation>
</comment>
<comment type="similarity">
    <text evidence="5">Belongs to the ATPase d subunit family.</text>
</comment>
<evidence type="ECO:0000250" key="1">
    <source>
        <dbReference type="UniProtKB" id="O75947"/>
    </source>
</evidence>
<evidence type="ECO:0000250" key="2">
    <source>
        <dbReference type="UniProtKB" id="P13620"/>
    </source>
</evidence>
<evidence type="ECO:0000250" key="3">
    <source>
        <dbReference type="UniProtKB" id="P19483"/>
    </source>
</evidence>
<evidence type="ECO:0000269" key="4">
    <source>
    </source>
</evidence>
<evidence type="ECO:0000305" key="5"/>
<evidence type="ECO:0007744" key="6">
    <source>
    </source>
</evidence>
<evidence type="ECO:0007744" key="7">
    <source>
    </source>
</evidence>
<evidence type="ECO:0007744" key="8">
    <source>
    </source>
</evidence>
<accession>Q9DCX2</accession>
<accession>B1ASE1</accession>
<accession>Q542H1</accession>
<accession>Q7M0I0</accession>
<accession>Q91YK9</accession>
<organism>
    <name type="scientific">Mus musculus</name>
    <name type="common">Mouse</name>
    <dbReference type="NCBI Taxonomy" id="10090"/>
    <lineage>
        <taxon>Eukaryota</taxon>
        <taxon>Metazoa</taxon>
        <taxon>Chordata</taxon>
        <taxon>Craniata</taxon>
        <taxon>Vertebrata</taxon>
        <taxon>Euteleostomi</taxon>
        <taxon>Mammalia</taxon>
        <taxon>Eutheria</taxon>
        <taxon>Euarchontoglires</taxon>
        <taxon>Glires</taxon>
        <taxon>Rodentia</taxon>
        <taxon>Myomorpha</taxon>
        <taxon>Muroidea</taxon>
        <taxon>Muridae</taxon>
        <taxon>Murinae</taxon>
        <taxon>Mus</taxon>
        <taxon>Mus</taxon>
    </lineage>
</organism>
<keyword id="KW-0007">Acetylation</keyword>
<keyword id="KW-0138">CF(0)</keyword>
<keyword id="KW-0903">Direct protein sequencing</keyword>
<keyword id="KW-0375">Hydrogen ion transport</keyword>
<keyword id="KW-0406">Ion transport</keyword>
<keyword id="KW-0472">Membrane</keyword>
<keyword id="KW-0496">Mitochondrion</keyword>
<keyword id="KW-0999">Mitochondrion inner membrane</keyword>
<keyword id="KW-1185">Reference proteome</keyword>
<keyword id="KW-0813">Transport</keyword>
<name>ATP5H_MOUSE</name>
<reference key="1">
    <citation type="submission" date="2001-02" db="EMBL/GenBank/DDBJ databases">
        <title>The mouse ATP synthase subunit D interacts with the C-terminal domain of Rh type C glycoprotein (Rhcg).</title>
        <authorList>
            <person name="Chen H."/>
            <person name="Huang C.-H."/>
        </authorList>
    </citation>
    <scope>NUCLEOTIDE SEQUENCE [MRNA]</scope>
    <source>
        <tissue>Kidney</tissue>
    </source>
</reference>
<reference key="2">
    <citation type="journal article" date="2005" name="Science">
        <title>The transcriptional landscape of the mammalian genome.</title>
        <authorList>
            <person name="Carninci P."/>
            <person name="Kasukawa T."/>
            <person name="Katayama S."/>
            <person name="Gough J."/>
            <person name="Frith M.C."/>
            <person name="Maeda N."/>
            <person name="Oyama R."/>
            <person name="Ravasi T."/>
            <person name="Lenhard B."/>
            <person name="Wells C."/>
            <person name="Kodzius R."/>
            <person name="Shimokawa K."/>
            <person name="Bajic V.B."/>
            <person name="Brenner S.E."/>
            <person name="Batalov S."/>
            <person name="Forrest A.R."/>
            <person name="Zavolan M."/>
            <person name="Davis M.J."/>
            <person name="Wilming L.G."/>
            <person name="Aidinis V."/>
            <person name="Allen J.E."/>
            <person name="Ambesi-Impiombato A."/>
            <person name="Apweiler R."/>
            <person name="Aturaliya R.N."/>
            <person name="Bailey T.L."/>
            <person name="Bansal M."/>
            <person name="Baxter L."/>
            <person name="Beisel K.W."/>
            <person name="Bersano T."/>
            <person name="Bono H."/>
            <person name="Chalk A.M."/>
            <person name="Chiu K.P."/>
            <person name="Choudhary V."/>
            <person name="Christoffels A."/>
            <person name="Clutterbuck D.R."/>
            <person name="Crowe M.L."/>
            <person name="Dalla E."/>
            <person name="Dalrymple B.P."/>
            <person name="de Bono B."/>
            <person name="Della Gatta G."/>
            <person name="di Bernardo D."/>
            <person name="Down T."/>
            <person name="Engstrom P."/>
            <person name="Fagiolini M."/>
            <person name="Faulkner G."/>
            <person name="Fletcher C.F."/>
            <person name="Fukushima T."/>
            <person name="Furuno M."/>
            <person name="Futaki S."/>
            <person name="Gariboldi M."/>
            <person name="Georgii-Hemming P."/>
            <person name="Gingeras T.R."/>
            <person name="Gojobori T."/>
            <person name="Green R.E."/>
            <person name="Gustincich S."/>
            <person name="Harbers M."/>
            <person name="Hayashi Y."/>
            <person name="Hensch T.K."/>
            <person name="Hirokawa N."/>
            <person name="Hill D."/>
            <person name="Huminiecki L."/>
            <person name="Iacono M."/>
            <person name="Ikeo K."/>
            <person name="Iwama A."/>
            <person name="Ishikawa T."/>
            <person name="Jakt M."/>
            <person name="Kanapin A."/>
            <person name="Katoh M."/>
            <person name="Kawasawa Y."/>
            <person name="Kelso J."/>
            <person name="Kitamura H."/>
            <person name="Kitano H."/>
            <person name="Kollias G."/>
            <person name="Krishnan S.P."/>
            <person name="Kruger A."/>
            <person name="Kummerfeld S.K."/>
            <person name="Kurochkin I.V."/>
            <person name="Lareau L.F."/>
            <person name="Lazarevic D."/>
            <person name="Lipovich L."/>
            <person name="Liu J."/>
            <person name="Liuni S."/>
            <person name="McWilliam S."/>
            <person name="Madan Babu M."/>
            <person name="Madera M."/>
            <person name="Marchionni L."/>
            <person name="Matsuda H."/>
            <person name="Matsuzawa S."/>
            <person name="Miki H."/>
            <person name="Mignone F."/>
            <person name="Miyake S."/>
            <person name="Morris K."/>
            <person name="Mottagui-Tabar S."/>
            <person name="Mulder N."/>
            <person name="Nakano N."/>
            <person name="Nakauchi H."/>
            <person name="Ng P."/>
            <person name="Nilsson R."/>
            <person name="Nishiguchi S."/>
            <person name="Nishikawa S."/>
            <person name="Nori F."/>
            <person name="Ohara O."/>
            <person name="Okazaki Y."/>
            <person name="Orlando V."/>
            <person name="Pang K.C."/>
            <person name="Pavan W.J."/>
            <person name="Pavesi G."/>
            <person name="Pesole G."/>
            <person name="Petrovsky N."/>
            <person name="Piazza S."/>
            <person name="Reed J."/>
            <person name="Reid J.F."/>
            <person name="Ring B.Z."/>
            <person name="Ringwald M."/>
            <person name="Rost B."/>
            <person name="Ruan Y."/>
            <person name="Salzberg S.L."/>
            <person name="Sandelin A."/>
            <person name="Schneider C."/>
            <person name="Schoenbach C."/>
            <person name="Sekiguchi K."/>
            <person name="Semple C.A."/>
            <person name="Seno S."/>
            <person name="Sessa L."/>
            <person name="Sheng Y."/>
            <person name="Shibata Y."/>
            <person name="Shimada H."/>
            <person name="Shimada K."/>
            <person name="Silva D."/>
            <person name="Sinclair B."/>
            <person name="Sperling S."/>
            <person name="Stupka E."/>
            <person name="Sugiura K."/>
            <person name="Sultana R."/>
            <person name="Takenaka Y."/>
            <person name="Taki K."/>
            <person name="Tammoja K."/>
            <person name="Tan S.L."/>
            <person name="Tang S."/>
            <person name="Taylor M.S."/>
            <person name="Tegner J."/>
            <person name="Teichmann S.A."/>
            <person name="Ueda H.R."/>
            <person name="van Nimwegen E."/>
            <person name="Verardo R."/>
            <person name="Wei C.L."/>
            <person name="Yagi K."/>
            <person name="Yamanishi H."/>
            <person name="Zabarovsky E."/>
            <person name="Zhu S."/>
            <person name="Zimmer A."/>
            <person name="Hide W."/>
            <person name="Bult C."/>
            <person name="Grimmond S.M."/>
            <person name="Teasdale R.D."/>
            <person name="Liu E.T."/>
            <person name="Brusic V."/>
            <person name="Quackenbush J."/>
            <person name="Wahlestedt C."/>
            <person name="Mattick J.S."/>
            <person name="Hume D.A."/>
            <person name="Kai C."/>
            <person name="Sasaki D."/>
            <person name="Tomaru Y."/>
            <person name="Fukuda S."/>
            <person name="Kanamori-Katayama M."/>
            <person name="Suzuki M."/>
            <person name="Aoki J."/>
            <person name="Arakawa T."/>
            <person name="Iida J."/>
            <person name="Imamura K."/>
            <person name="Itoh M."/>
            <person name="Kato T."/>
            <person name="Kawaji H."/>
            <person name="Kawagashira N."/>
            <person name="Kawashima T."/>
            <person name="Kojima M."/>
            <person name="Kondo S."/>
            <person name="Konno H."/>
            <person name="Nakano K."/>
            <person name="Ninomiya N."/>
            <person name="Nishio T."/>
            <person name="Okada M."/>
            <person name="Plessy C."/>
            <person name="Shibata K."/>
            <person name="Shiraki T."/>
            <person name="Suzuki S."/>
            <person name="Tagami M."/>
            <person name="Waki K."/>
            <person name="Watahiki A."/>
            <person name="Okamura-Oho Y."/>
            <person name="Suzuki H."/>
            <person name="Kawai J."/>
            <person name="Hayashizaki Y."/>
        </authorList>
    </citation>
    <scope>NUCLEOTIDE SEQUENCE [LARGE SCALE MRNA]</scope>
    <source>
        <strain>C57BL/6J</strain>
        <strain>NOD</strain>
        <tissue>Kidney</tissue>
        <tissue>Thymus</tissue>
    </source>
</reference>
<reference key="3">
    <citation type="journal article" date="2009" name="PLoS Biol.">
        <title>Lineage-specific biology revealed by a finished genome assembly of the mouse.</title>
        <authorList>
            <person name="Church D.M."/>
            <person name="Goodstadt L."/>
            <person name="Hillier L.W."/>
            <person name="Zody M.C."/>
            <person name="Goldstein S."/>
            <person name="She X."/>
            <person name="Bult C.J."/>
            <person name="Agarwala R."/>
            <person name="Cherry J.L."/>
            <person name="DiCuccio M."/>
            <person name="Hlavina W."/>
            <person name="Kapustin Y."/>
            <person name="Meric P."/>
            <person name="Maglott D."/>
            <person name="Birtle Z."/>
            <person name="Marques A.C."/>
            <person name="Graves T."/>
            <person name="Zhou S."/>
            <person name="Teague B."/>
            <person name="Potamousis K."/>
            <person name="Churas C."/>
            <person name="Place M."/>
            <person name="Herschleb J."/>
            <person name="Runnheim R."/>
            <person name="Forrest D."/>
            <person name="Amos-Landgraf J."/>
            <person name="Schwartz D.C."/>
            <person name="Cheng Z."/>
            <person name="Lindblad-Toh K."/>
            <person name="Eichler E.E."/>
            <person name="Ponting C.P."/>
        </authorList>
    </citation>
    <scope>NUCLEOTIDE SEQUENCE [LARGE SCALE GENOMIC DNA]</scope>
    <source>
        <strain>C57BL/6J</strain>
    </source>
</reference>
<reference key="4">
    <citation type="journal article" date="2004" name="Genome Res.">
        <title>The status, quality, and expansion of the NIH full-length cDNA project: the Mammalian Gene Collection (MGC).</title>
        <authorList>
            <consortium name="The MGC Project Team"/>
        </authorList>
    </citation>
    <scope>NUCLEOTIDE SEQUENCE [LARGE SCALE MRNA]</scope>
    <source>
        <strain>C57BL/6J</strain>
        <tissue>Brain</tissue>
    </source>
</reference>
<reference key="5">
    <citation type="submission" date="2007-04" db="UniProtKB">
        <authorList>
            <person name="Lubec G."/>
            <person name="Klug S."/>
            <person name="Kang S.U."/>
        </authorList>
    </citation>
    <scope>PROTEIN SEQUENCE OF 10-25; 33-73; 86-111; 124-144 AND 149-161</scope>
    <scope>IDENTIFICATION BY MASS SPECTROMETRY</scope>
    <source>
        <strain>C57BL/6J</strain>
        <tissue>Brain</tissue>
        <tissue>Hippocampus</tissue>
    </source>
</reference>
<reference key="6">
    <citation type="journal article" date="1996" name="Kawasaki Igakkaishi">
        <title>Analysis of proteins isolated by two dimensional electrophoresis of mouse neuroblastoma cells.</title>
        <authorList>
            <person name="Kato H."/>
        </authorList>
    </citation>
    <scope>PROTEIN SEQUENCE OF 150-161</scope>
</reference>
<reference key="7">
    <citation type="journal article" date="2006" name="Mol. Cell">
        <title>Substrate and functional diversity of lysine acetylation revealed by a proteomics survey.</title>
        <authorList>
            <person name="Kim S.C."/>
            <person name="Sprung R."/>
            <person name="Chen Y."/>
            <person name="Xu Y."/>
            <person name="Ball H."/>
            <person name="Pei J."/>
            <person name="Cheng T."/>
            <person name="Kho Y."/>
            <person name="Xiao H."/>
            <person name="Xiao L."/>
            <person name="Grishin N.V."/>
            <person name="White M."/>
            <person name="Yang X.-J."/>
            <person name="Zhao Y."/>
        </authorList>
    </citation>
    <scope>ACETYLATION [LARGE SCALE ANALYSIS] AT LYS-117</scope>
    <scope>IDENTIFICATION BY MASS SPECTROMETRY [LARGE SCALE ANALYSIS]</scope>
    <source>
        <tissue>Liver</tissue>
    </source>
</reference>
<reference key="8">
    <citation type="journal article" date="2010" name="Cell">
        <title>A tissue-specific atlas of mouse protein phosphorylation and expression.</title>
        <authorList>
            <person name="Huttlin E.L."/>
            <person name="Jedrychowski M.P."/>
            <person name="Elias J.E."/>
            <person name="Goswami T."/>
            <person name="Rad R."/>
            <person name="Beausoleil S.A."/>
            <person name="Villen J."/>
            <person name="Haas W."/>
            <person name="Sowa M.E."/>
            <person name="Gygi S.P."/>
        </authorList>
    </citation>
    <scope>IDENTIFICATION BY MASS SPECTROMETRY [LARGE SCALE ANALYSIS]</scope>
    <source>
        <tissue>Brain</tissue>
        <tissue>Brown adipose tissue</tissue>
        <tissue>Heart</tissue>
        <tissue>Kidney</tissue>
        <tissue>Liver</tissue>
        <tissue>Lung</tissue>
        <tissue>Pancreas</tissue>
        <tissue>Spleen</tissue>
        <tissue>Testis</tissue>
    </source>
</reference>
<reference key="9">
    <citation type="journal article" date="2013" name="Mol. Cell">
        <title>SIRT5-mediated lysine desuccinylation impacts diverse metabolic pathways.</title>
        <authorList>
            <person name="Park J."/>
            <person name="Chen Y."/>
            <person name="Tishkoff D.X."/>
            <person name="Peng C."/>
            <person name="Tan M."/>
            <person name="Dai L."/>
            <person name="Xie Z."/>
            <person name="Zhang Y."/>
            <person name="Zwaans B.M."/>
            <person name="Skinner M.E."/>
            <person name="Lombard D.B."/>
            <person name="Zhao Y."/>
        </authorList>
    </citation>
    <scope>SUCCINYLATION [LARGE SCALE ANALYSIS] AT LYS-78; LYS-85; LYS-95; LYS-144 AND LYS-149</scope>
    <scope>IDENTIFICATION BY MASS SPECTROMETRY [LARGE SCALE ANALYSIS]</scope>
    <source>
        <tissue>Embryonic fibroblast</tissue>
        <tissue>Liver</tissue>
    </source>
</reference>
<reference key="10">
    <citation type="journal article" date="2013" name="Proc. Natl. Acad. Sci. U.S.A.">
        <title>Label-free quantitative proteomics of the lysine acetylome in mitochondria identifies substrates of SIRT3 in metabolic pathways.</title>
        <authorList>
            <person name="Rardin M.J."/>
            <person name="Newman J.C."/>
            <person name="Held J.M."/>
            <person name="Cusack M.P."/>
            <person name="Sorensen D.J."/>
            <person name="Li B."/>
            <person name="Schilling B."/>
            <person name="Mooney S.D."/>
            <person name="Kahn C.R."/>
            <person name="Verdin E."/>
            <person name="Gibson B.W."/>
        </authorList>
    </citation>
    <scope>ACETYLATION [LARGE SCALE ANALYSIS] AT LYS-32; LYS-48; LYS-63; LYS-72; LYS-78; LYS-85; LYS-95; LYS-117; LYS-144 AND LYS-149</scope>
    <scope>IDENTIFICATION BY MASS SPECTROMETRY [LARGE SCALE ANALYSIS]</scope>
    <source>
        <tissue>Liver</tissue>
    </source>
</reference>
<reference key="11">
    <citation type="journal article" date="2020" name="Nat. Commun.">
        <title>MFSD7C switches mitochondrial ATP synthesis to thermogenesis in response to heme.</title>
        <authorList>
            <person name="Li Y."/>
            <person name="Ivica N.A."/>
            <person name="Dong T."/>
            <person name="Papageorgiou D.P."/>
            <person name="He Y."/>
            <person name="Brown D.R."/>
            <person name="Kleyman M."/>
            <person name="Hu G."/>
            <person name="Chen W.W."/>
            <person name="Sullivan L.B."/>
            <person name="Del Rosario A."/>
            <person name="Hammond P.T."/>
            <person name="Vander Heiden M.G."/>
            <person name="Chen J."/>
        </authorList>
    </citation>
    <scope>INTERACTION WITH FLVCR2</scope>
</reference>